<feature type="chain" id="PRO_0000388004" description="Polyketide biosynthesis malonyl CoA-acyl carrier protein transacylase PksC">
    <location>
        <begin position="1"/>
        <end position="288"/>
    </location>
</feature>
<feature type="active site" evidence="1">
    <location>
        <position position="87"/>
    </location>
</feature>
<feature type="active site" evidence="1">
    <location>
        <position position="193"/>
    </location>
</feature>
<feature type="strand" evidence="6">
    <location>
        <begin position="2"/>
        <end position="6"/>
    </location>
</feature>
<feature type="turn" evidence="6">
    <location>
        <begin position="14"/>
        <end position="19"/>
    </location>
</feature>
<feature type="helix" evidence="6">
    <location>
        <begin position="20"/>
        <end position="23"/>
    </location>
</feature>
<feature type="helix" evidence="6">
    <location>
        <begin position="25"/>
        <end position="35"/>
    </location>
</feature>
<feature type="helix" evidence="6">
    <location>
        <begin position="39"/>
        <end position="45"/>
    </location>
</feature>
<feature type="helix" evidence="6">
    <location>
        <begin position="47"/>
        <end position="52"/>
    </location>
</feature>
<feature type="helix" evidence="6">
    <location>
        <begin position="54"/>
        <end position="76"/>
    </location>
</feature>
<feature type="strand" evidence="6">
    <location>
        <begin position="81"/>
        <end position="86"/>
    </location>
</feature>
<feature type="helix" evidence="6">
    <location>
        <begin position="89"/>
        <end position="96"/>
    </location>
</feature>
<feature type="helix" evidence="6">
    <location>
        <begin position="102"/>
        <end position="117"/>
    </location>
</feature>
<feature type="strand" evidence="6">
    <location>
        <begin position="121"/>
        <end position="129"/>
    </location>
</feature>
<feature type="helix" evidence="6">
    <location>
        <begin position="132"/>
        <end position="141"/>
    </location>
</feature>
<feature type="strand" evidence="6">
    <location>
        <begin position="147"/>
        <end position="154"/>
    </location>
</feature>
<feature type="strand" evidence="6">
    <location>
        <begin position="157"/>
        <end position="163"/>
    </location>
</feature>
<feature type="helix" evidence="6">
    <location>
        <begin position="164"/>
        <end position="175"/>
    </location>
</feature>
<feature type="strand" evidence="6">
    <location>
        <begin position="182"/>
        <end position="185"/>
    </location>
</feature>
<feature type="helix" evidence="6">
    <location>
        <begin position="195"/>
        <end position="197"/>
    </location>
</feature>
<feature type="helix" evidence="6">
    <location>
        <begin position="198"/>
        <end position="208"/>
    </location>
</feature>
<feature type="turn" evidence="6">
    <location>
        <begin position="223"/>
        <end position="225"/>
    </location>
</feature>
<feature type="strand" evidence="6">
    <location>
        <begin position="226"/>
        <end position="228"/>
    </location>
</feature>
<feature type="helix" evidence="6">
    <location>
        <begin position="231"/>
        <end position="233"/>
    </location>
</feature>
<feature type="helix" evidence="6">
    <location>
        <begin position="234"/>
        <end position="240"/>
    </location>
</feature>
<feature type="helix" evidence="6">
    <location>
        <begin position="241"/>
        <end position="243"/>
    </location>
</feature>
<feature type="helix" evidence="6">
    <location>
        <begin position="248"/>
        <end position="256"/>
    </location>
</feature>
<feature type="strand" evidence="6">
    <location>
        <begin position="262"/>
        <end position="265"/>
    </location>
</feature>
<feature type="strand" evidence="6">
    <location>
        <begin position="267"/>
        <end position="270"/>
    </location>
</feature>
<feature type="helix" evidence="6">
    <location>
        <begin position="271"/>
        <end position="284"/>
    </location>
</feature>
<keyword id="KW-0002">3D-structure</keyword>
<keyword id="KW-0012">Acyltransferase</keyword>
<keyword id="KW-0045">Antibiotic biosynthesis</keyword>
<keyword id="KW-0963">Cytoplasm</keyword>
<keyword id="KW-1185">Reference proteome</keyword>
<keyword id="KW-0808">Transferase</keyword>
<gene>
    <name type="primary">pksC</name>
    <name type="ordered locus">BSU17100</name>
</gene>
<evidence type="ECO:0000250" key="1"/>
<evidence type="ECO:0000269" key="2">
    <source>
    </source>
</evidence>
<evidence type="ECO:0000269" key="3">
    <source>
    </source>
</evidence>
<evidence type="ECO:0000269" key="4">
    <source>
    </source>
</evidence>
<evidence type="ECO:0000305" key="5"/>
<evidence type="ECO:0007829" key="6">
    <source>
        <dbReference type="PDB" id="5DZ6"/>
    </source>
</evidence>
<dbReference type="EC" id="2.3.1.39"/>
<dbReference type="EMBL" id="AL009126">
    <property type="protein sequence ID" value="CAB13582.1"/>
    <property type="molecule type" value="Genomic_DNA"/>
</dbReference>
<dbReference type="PIR" id="A69678">
    <property type="entry name" value="A69678"/>
</dbReference>
<dbReference type="RefSeq" id="NP_389591.1">
    <property type="nucleotide sequence ID" value="NC_000964.3"/>
</dbReference>
<dbReference type="PDB" id="5DZ6">
    <property type="method" value="X-ray"/>
    <property type="resolution" value="1.44 A"/>
    <property type="chains" value="A=1-288"/>
</dbReference>
<dbReference type="PDBsum" id="5DZ6"/>
<dbReference type="SMR" id="O34825"/>
<dbReference type="FunCoup" id="O34825">
    <property type="interactions" value="313"/>
</dbReference>
<dbReference type="STRING" id="224308.BSU17100"/>
<dbReference type="PaxDb" id="224308-BSU17100"/>
<dbReference type="EnsemblBacteria" id="CAB13582">
    <property type="protein sequence ID" value="CAB13582"/>
    <property type="gene ID" value="BSU_17100"/>
</dbReference>
<dbReference type="GeneID" id="939504"/>
<dbReference type="KEGG" id="bsu:BSU17100"/>
<dbReference type="PATRIC" id="fig|224308.179.peg.1853"/>
<dbReference type="eggNOG" id="COG0331">
    <property type="taxonomic scope" value="Bacteria"/>
</dbReference>
<dbReference type="InParanoid" id="O34825"/>
<dbReference type="OrthoDB" id="9805460at2"/>
<dbReference type="PhylomeDB" id="O34825"/>
<dbReference type="BioCyc" id="BSUB:BSU17100-MONOMER"/>
<dbReference type="UniPathway" id="UPA01003"/>
<dbReference type="Proteomes" id="UP000001570">
    <property type="component" value="Chromosome"/>
</dbReference>
<dbReference type="GO" id="GO:0005829">
    <property type="term" value="C:cytosol"/>
    <property type="evidence" value="ECO:0000318"/>
    <property type="project" value="GO_Central"/>
</dbReference>
<dbReference type="GO" id="GO:0004314">
    <property type="term" value="F:[acyl-carrier-protein] S-malonyltransferase activity"/>
    <property type="evidence" value="ECO:0000318"/>
    <property type="project" value="GO_Central"/>
</dbReference>
<dbReference type="GO" id="GO:0017000">
    <property type="term" value="P:antibiotic biosynthetic process"/>
    <property type="evidence" value="ECO:0007669"/>
    <property type="project" value="UniProtKB-KW"/>
</dbReference>
<dbReference type="GO" id="GO:0006633">
    <property type="term" value="P:fatty acid biosynthetic process"/>
    <property type="evidence" value="ECO:0000318"/>
    <property type="project" value="GO_Central"/>
</dbReference>
<dbReference type="FunFam" id="3.30.70.250:FF:000001">
    <property type="entry name" value="Malonyl CoA-acyl carrier protein transacylase"/>
    <property type="match status" value="1"/>
</dbReference>
<dbReference type="Gene3D" id="3.30.70.250">
    <property type="entry name" value="Malonyl-CoA ACP transacylase, ACP-binding"/>
    <property type="match status" value="1"/>
</dbReference>
<dbReference type="Gene3D" id="3.40.366.10">
    <property type="entry name" value="Malonyl-Coenzyme A Acyl Carrier Protein, domain 2"/>
    <property type="match status" value="1"/>
</dbReference>
<dbReference type="InterPro" id="IPR001227">
    <property type="entry name" value="Ac_transferase_dom_sf"/>
</dbReference>
<dbReference type="InterPro" id="IPR014043">
    <property type="entry name" value="Acyl_transferase_dom"/>
</dbReference>
<dbReference type="InterPro" id="IPR016035">
    <property type="entry name" value="Acyl_Trfase/lysoPLipase"/>
</dbReference>
<dbReference type="InterPro" id="IPR050858">
    <property type="entry name" value="Mal-CoA-ACP_Trans/PKS_FabD"/>
</dbReference>
<dbReference type="InterPro" id="IPR024925">
    <property type="entry name" value="Malonyl_CoA-ACP_transAc"/>
</dbReference>
<dbReference type="InterPro" id="IPR004410">
    <property type="entry name" value="Malonyl_CoA-ACP_transAc_FabD"/>
</dbReference>
<dbReference type="InterPro" id="IPR016036">
    <property type="entry name" value="Malonyl_transacylase_ACP-bd"/>
</dbReference>
<dbReference type="NCBIfam" id="TIGR00128">
    <property type="entry name" value="fabD"/>
    <property type="match status" value="1"/>
</dbReference>
<dbReference type="PANTHER" id="PTHR42681">
    <property type="entry name" value="MALONYL-COA-ACYL CARRIER PROTEIN TRANSACYLASE, MITOCHONDRIAL"/>
    <property type="match status" value="1"/>
</dbReference>
<dbReference type="PANTHER" id="PTHR42681:SF1">
    <property type="entry name" value="MALONYL-COA-ACYL CARRIER PROTEIN TRANSACYLASE, MITOCHONDRIAL"/>
    <property type="match status" value="1"/>
</dbReference>
<dbReference type="Pfam" id="PF00698">
    <property type="entry name" value="Acyl_transf_1"/>
    <property type="match status" value="1"/>
</dbReference>
<dbReference type="PIRSF" id="PIRSF000446">
    <property type="entry name" value="Mct"/>
    <property type="match status" value="1"/>
</dbReference>
<dbReference type="SMART" id="SM00827">
    <property type="entry name" value="PKS_AT"/>
    <property type="match status" value="1"/>
</dbReference>
<dbReference type="SUPFAM" id="SSF52151">
    <property type="entry name" value="FabD/lysophospholipase-like"/>
    <property type="match status" value="1"/>
</dbReference>
<dbReference type="SUPFAM" id="SSF55048">
    <property type="entry name" value="Probable ACP-binding domain of malonyl-CoA ACP transacylase"/>
    <property type="match status" value="1"/>
</dbReference>
<organism>
    <name type="scientific">Bacillus subtilis (strain 168)</name>
    <dbReference type="NCBI Taxonomy" id="224308"/>
    <lineage>
        <taxon>Bacteria</taxon>
        <taxon>Bacillati</taxon>
        <taxon>Bacillota</taxon>
        <taxon>Bacilli</taxon>
        <taxon>Bacillales</taxon>
        <taxon>Bacillaceae</taxon>
        <taxon>Bacillus</taxon>
    </lineage>
</organism>
<reference key="1">
    <citation type="journal article" date="1997" name="Nature">
        <title>The complete genome sequence of the Gram-positive bacterium Bacillus subtilis.</title>
        <authorList>
            <person name="Kunst F."/>
            <person name="Ogasawara N."/>
            <person name="Moszer I."/>
            <person name="Albertini A.M."/>
            <person name="Alloni G."/>
            <person name="Azevedo V."/>
            <person name="Bertero M.G."/>
            <person name="Bessieres P."/>
            <person name="Bolotin A."/>
            <person name="Borchert S."/>
            <person name="Borriss R."/>
            <person name="Boursier L."/>
            <person name="Brans A."/>
            <person name="Braun M."/>
            <person name="Brignell S.C."/>
            <person name="Bron S."/>
            <person name="Brouillet S."/>
            <person name="Bruschi C.V."/>
            <person name="Caldwell B."/>
            <person name="Capuano V."/>
            <person name="Carter N.M."/>
            <person name="Choi S.-K."/>
            <person name="Codani J.-J."/>
            <person name="Connerton I.F."/>
            <person name="Cummings N.J."/>
            <person name="Daniel R.A."/>
            <person name="Denizot F."/>
            <person name="Devine K.M."/>
            <person name="Duesterhoeft A."/>
            <person name="Ehrlich S.D."/>
            <person name="Emmerson P.T."/>
            <person name="Entian K.-D."/>
            <person name="Errington J."/>
            <person name="Fabret C."/>
            <person name="Ferrari E."/>
            <person name="Foulger D."/>
            <person name="Fritz C."/>
            <person name="Fujita M."/>
            <person name="Fujita Y."/>
            <person name="Fuma S."/>
            <person name="Galizzi A."/>
            <person name="Galleron N."/>
            <person name="Ghim S.-Y."/>
            <person name="Glaser P."/>
            <person name="Goffeau A."/>
            <person name="Golightly E.J."/>
            <person name="Grandi G."/>
            <person name="Guiseppi G."/>
            <person name="Guy B.J."/>
            <person name="Haga K."/>
            <person name="Haiech J."/>
            <person name="Harwood C.R."/>
            <person name="Henaut A."/>
            <person name="Hilbert H."/>
            <person name="Holsappel S."/>
            <person name="Hosono S."/>
            <person name="Hullo M.-F."/>
            <person name="Itaya M."/>
            <person name="Jones L.-M."/>
            <person name="Joris B."/>
            <person name="Karamata D."/>
            <person name="Kasahara Y."/>
            <person name="Klaerr-Blanchard M."/>
            <person name="Klein C."/>
            <person name="Kobayashi Y."/>
            <person name="Koetter P."/>
            <person name="Koningstein G."/>
            <person name="Krogh S."/>
            <person name="Kumano M."/>
            <person name="Kurita K."/>
            <person name="Lapidus A."/>
            <person name="Lardinois S."/>
            <person name="Lauber J."/>
            <person name="Lazarevic V."/>
            <person name="Lee S.-M."/>
            <person name="Levine A."/>
            <person name="Liu H."/>
            <person name="Masuda S."/>
            <person name="Mauel C."/>
            <person name="Medigue C."/>
            <person name="Medina N."/>
            <person name="Mellado R.P."/>
            <person name="Mizuno M."/>
            <person name="Moestl D."/>
            <person name="Nakai S."/>
            <person name="Noback M."/>
            <person name="Noone D."/>
            <person name="O'Reilly M."/>
            <person name="Ogawa K."/>
            <person name="Ogiwara A."/>
            <person name="Oudega B."/>
            <person name="Park S.-H."/>
            <person name="Parro V."/>
            <person name="Pohl T.M."/>
            <person name="Portetelle D."/>
            <person name="Porwollik S."/>
            <person name="Prescott A.M."/>
            <person name="Presecan E."/>
            <person name="Pujic P."/>
            <person name="Purnelle B."/>
            <person name="Rapoport G."/>
            <person name="Rey M."/>
            <person name="Reynolds S."/>
            <person name="Rieger M."/>
            <person name="Rivolta C."/>
            <person name="Rocha E."/>
            <person name="Roche B."/>
            <person name="Rose M."/>
            <person name="Sadaie Y."/>
            <person name="Sato T."/>
            <person name="Scanlan E."/>
            <person name="Schleich S."/>
            <person name="Schroeter R."/>
            <person name="Scoffone F."/>
            <person name="Sekiguchi J."/>
            <person name="Sekowska A."/>
            <person name="Seror S.J."/>
            <person name="Serror P."/>
            <person name="Shin B.-S."/>
            <person name="Soldo B."/>
            <person name="Sorokin A."/>
            <person name="Tacconi E."/>
            <person name="Takagi T."/>
            <person name="Takahashi H."/>
            <person name="Takemaru K."/>
            <person name="Takeuchi M."/>
            <person name="Tamakoshi A."/>
            <person name="Tanaka T."/>
            <person name="Terpstra P."/>
            <person name="Tognoni A."/>
            <person name="Tosato V."/>
            <person name="Uchiyama S."/>
            <person name="Vandenbol M."/>
            <person name="Vannier F."/>
            <person name="Vassarotti A."/>
            <person name="Viari A."/>
            <person name="Wambutt R."/>
            <person name="Wedler E."/>
            <person name="Wedler H."/>
            <person name="Weitzenegger T."/>
            <person name="Winters P."/>
            <person name="Wipat A."/>
            <person name="Yamamoto H."/>
            <person name="Yamane K."/>
            <person name="Yasumoto K."/>
            <person name="Yata K."/>
            <person name="Yoshida K."/>
            <person name="Yoshikawa H.-F."/>
            <person name="Zumstein E."/>
            <person name="Yoshikawa H."/>
            <person name="Danchin A."/>
        </authorList>
    </citation>
    <scope>NUCLEOTIDE SEQUENCE [LARGE SCALE GENOMIC DNA]</scope>
    <source>
        <strain>168</strain>
    </source>
</reference>
<reference key="2">
    <citation type="journal article" date="2006" name="Proc. Natl. Acad. Sci. U.S.A.">
        <title>Convergence of isoprene and polyketide biosynthetic machinery: isoprenyl-S-carrier proteins in the pksX pathway of Bacillus subtilis.</title>
        <authorList>
            <person name="Calderone C.T."/>
            <person name="Kowtoniuk W.E."/>
            <person name="Kelleher N.L."/>
            <person name="Walsh C.T."/>
            <person name="Dorrestein P.C."/>
        </authorList>
    </citation>
    <scope>FUNCTION</scope>
    <scope>CATALYTIC ACTIVITY</scope>
</reference>
<reference key="3">
    <citation type="journal article" date="2007" name="Proc. Natl. Acad. Sci. U.S.A.">
        <title>A singular enzymatic megacomplex from Bacillus subtilis.</title>
        <authorList>
            <person name="Straight P.D."/>
            <person name="Fischbach M.A."/>
            <person name="Walsh C.T."/>
            <person name="Rudner D.Z."/>
            <person name="Kolter R."/>
        </authorList>
    </citation>
    <scope>SUBCELLULAR LOCATION</scope>
    <source>
        <strain>168 / Marburg / ATCC 6051 / DSM 10 / JCM 1465 / NBRC 13719 / NCIMB 3610 / NRRL NRS-744 / VKM B-501</strain>
    </source>
</reference>
<reference key="4">
    <citation type="journal article" date="2007" name="Proc. Natl. Acad. Sci. U.S.A.">
        <title>The identification of bacillaene, the product of the PksX megacomplex in Bacillus subtilis.</title>
        <authorList>
            <person name="Butcher R.A."/>
            <person name="Schroeder F.C."/>
            <person name="Fischbach M.A."/>
            <person name="Straight P.D."/>
            <person name="Kolter R."/>
            <person name="Walsh C.T."/>
            <person name="Clardy J."/>
        </authorList>
    </citation>
    <scope>FUNCTION IN BACILLAENE BIOSYNTHESIS</scope>
    <source>
        <strain>168 / Marburg / ATCC 6051 / DSM 10 / JCM 1465 / NBRC 13719 / NCIMB 3610 / NRRL NRS-744 / VKM B-501</strain>
    </source>
</reference>
<accession>O34825</accession>
<sequence>MITYVFPGQGSQKQGMGSGLFDEFKELTDQADEILGYSIKRLCLENPYSNLNKTQFTQPALYVVNALSYLKKIRDEEVKPDFVAGHSLGEYNALFAAEAFDFETGLQLVRKRGELMSLISNGGMAAVMGLNEEQVAKALKEYHLHDVDIANVNAPYQIVISGKKDEIEKAASLFETMTEVTMVLPLNVSGAFHSRYMNKAKEEFEEFLHAFYFSPPSIPVISNVYAKPYTYEFMKQTLADQINHSVKWTDSISYLMKKGHMEFEEVGPGNVLTGLIHRIKKDAEAMPR</sequence>
<comment type="function">
    <text evidence="2 4">Involved in some intermediate steps for the synthesis of the antibiotic polyketide bacillaene which is involved in secondary metabolism. It catalyzes the transfer of the malonyl-CoA group to the acyl-carrier-protein AcpK (Mal-AcpK).</text>
</comment>
<comment type="catalytic activity">
    <reaction evidence="2">
        <text>holo-[ACP] + malonyl-CoA = malonyl-[ACP] + CoA</text>
        <dbReference type="Rhea" id="RHEA:41792"/>
        <dbReference type="Rhea" id="RHEA-COMP:9623"/>
        <dbReference type="Rhea" id="RHEA-COMP:9685"/>
        <dbReference type="ChEBI" id="CHEBI:57287"/>
        <dbReference type="ChEBI" id="CHEBI:57384"/>
        <dbReference type="ChEBI" id="CHEBI:64479"/>
        <dbReference type="ChEBI" id="CHEBI:78449"/>
        <dbReference type="EC" id="2.3.1.39"/>
    </reaction>
</comment>
<comment type="pathway">
    <text>Antibiotic biosynthesis; bacillaene biosynthesis.</text>
</comment>
<comment type="subcellular location">
    <subcellularLocation>
        <location evidence="3">Cytoplasm</location>
    </subcellularLocation>
</comment>
<comment type="similarity">
    <text evidence="5">Belongs to the FabD family.</text>
</comment>
<name>PKSC_BACSU</name>
<protein>
    <recommendedName>
        <fullName>Polyketide biosynthesis malonyl CoA-acyl carrier protein transacylase PksC</fullName>
        <shortName>AT</shortName>
        <ecNumber>2.3.1.39</ecNumber>
    </recommendedName>
</protein>
<proteinExistence type="evidence at protein level"/>